<name>RGI3_ARATH</name>
<reference key="1">
    <citation type="journal article" date="1999" name="Nature">
        <title>Sequence and analysis of chromosome 4 of the plant Arabidopsis thaliana.</title>
        <authorList>
            <person name="Mayer K.F.X."/>
            <person name="Schueller C."/>
            <person name="Wambutt R."/>
            <person name="Murphy G."/>
            <person name="Volckaert G."/>
            <person name="Pohl T."/>
            <person name="Duesterhoeft A."/>
            <person name="Stiekema W."/>
            <person name="Entian K.-D."/>
            <person name="Terryn N."/>
            <person name="Harris B."/>
            <person name="Ansorge W."/>
            <person name="Brandt P."/>
            <person name="Grivell L.A."/>
            <person name="Rieger M."/>
            <person name="Weichselgartner M."/>
            <person name="de Simone V."/>
            <person name="Obermaier B."/>
            <person name="Mache R."/>
            <person name="Mueller M."/>
            <person name="Kreis M."/>
            <person name="Delseny M."/>
            <person name="Puigdomenech P."/>
            <person name="Watson M."/>
            <person name="Schmidtheini T."/>
            <person name="Reichert B."/>
            <person name="Portetelle D."/>
            <person name="Perez-Alonso M."/>
            <person name="Boutry M."/>
            <person name="Bancroft I."/>
            <person name="Vos P."/>
            <person name="Hoheisel J."/>
            <person name="Zimmermann W."/>
            <person name="Wedler H."/>
            <person name="Ridley P."/>
            <person name="Langham S.-A."/>
            <person name="McCullagh B."/>
            <person name="Bilham L."/>
            <person name="Robben J."/>
            <person name="van der Schueren J."/>
            <person name="Grymonprez B."/>
            <person name="Chuang Y.-J."/>
            <person name="Vandenbussche F."/>
            <person name="Braeken M."/>
            <person name="Weltjens I."/>
            <person name="Voet M."/>
            <person name="Bastiaens I."/>
            <person name="Aert R."/>
            <person name="Defoor E."/>
            <person name="Weitzenegger T."/>
            <person name="Bothe G."/>
            <person name="Ramsperger U."/>
            <person name="Hilbert H."/>
            <person name="Braun M."/>
            <person name="Holzer E."/>
            <person name="Brandt A."/>
            <person name="Peters S."/>
            <person name="van Staveren M."/>
            <person name="Dirkse W."/>
            <person name="Mooijman P."/>
            <person name="Klein Lankhorst R."/>
            <person name="Rose M."/>
            <person name="Hauf J."/>
            <person name="Koetter P."/>
            <person name="Berneiser S."/>
            <person name="Hempel S."/>
            <person name="Feldpausch M."/>
            <person name="Lamberth S."/>
            <person name="Van den Daele H."/>
            <person name="De Keyser A."/>
            <person name="Buysshaert C."/>
            <person name="Gielen J."/>
            <person name="Villarroel R."/>
            <person name="De Clercq R."/>
            <person name="van Montagu M."/>
            <person name="Rogers J."/>
            <person name="Cronin A."/>
            <person name="Quail M.A."/>
            <person name="Bray-Allen S."/>
            <person name="Clark L."/>
            <person name="Doggett J."/>
            <person name="Hall S."/>
            <person name="Kay M."/>
            <person name="Lennard N."/>
            <person name="McLay K."/>
            <person name="Mayes R."/>
            <person name="Pettett A."/>
            <person name="Rajandream M.A."/>
            <person name="Lyne M."/>
            <person name="Benes V."/>
            <person name="Rechmann S."/>
            <person name="Borkova D."/>
            <person name="Bloecker H."/>
            <person name="Scharfe M."/>
            <person name="Grimm M."/>
            <person name="Loehnert T.-H."/>
            <person name="Dose S."/>
            <person name="de Haan M."/>
            <person name="Maarse A.C."/>
            <person name="Schaefer M."/>
            <person name="Mueller-Auer S."/>
            <person name="Gabel C."/>
            <person name="Fuchs M."/>
            <person name="Fartmann B."/>
            <person name="Granderath K."/>
            <person name="Dauner D."/>
            <person name="Herzl A."/>
            <person name="Neumann S."/>
            <person name="Argiriou A."/>
            <person name="Vitale D."/>
            <person name="Liguori R."/>
            <person name="Piravandi E."/>
            <person name="Massenet O."/>
            <person name="Quigley F."/>
            <person name="Clabauld G."/>
            <person name="Muendlein A."/>
            <person name="Felber R."/>
            <person name="Schnabl S."/>
            <person name="Hiller R."/>
            <person name="Schmidt W."/>
            <person name="Lecharny A."/>
            <person name="Aubourg S."/>
            <person name="Chefdor F."/>
            <person name="Cooke R."/>
            <person name="Berger C."/>
            <person name="Monfort A."/>
            <person name="Casacuberta E."/>
            <person name="Gibbons T."/>
            <person name="Weber N."/>
            <person name="Vandenbol M."/>
            <person name="Bargues M."/>
            <person name="Terol J."/>
            <person name="Torres A."/>
            <person name="Perez-Perez A."/>
            <person name="Purnelle B."/>
            <person name="Bent E."/>
            <person name="Johnson S."/>
            <person name="Tacon D."/>
            <person name="Jesse T."/>
            <person name="Heijnen L."/>
            <person name="Schwarz S."/>
            <person name="Scholler P."/>
            <person name="Heber S."/>
            <person name="Francs P."/>
            <person name="Bielke C."/>
            <person name="Frishman D."/>
            <person name="Haase D."/>
            <person name="Lemcke K."/>
            <person name="Mewes H.-W."/>
            <person name="Stocker S."/>
            <person name="Zaccaria P."/>
            <person name="Bevan M."/>
            <person name="Wilson R.K."/>
            <person name="de la Bastide M."/>
            <person name="Habermann K."/>
            <person name="Parnell L."/>
            <person name="Dedhia N."/>
            <person name="Gnoj L."/>
            <person name="Schutz K."/>
            <person name="Huang E."/>
            <person name="Spiegel L."/>
            <person name="Sekhon M."/>
            <person name="Murray J."/>
            <person name="Sheet P."/>
            <person name="Cordes M."/>
            <person name="Abu-Threideh J."/>
            <person name="Stoneking T."/>
            <person name="Kalicki J."/>
            <person name="Graves T."/>
            <person name="Harmon G."/>
            <person name="Edwards J."/>
            <person name="Latreille P."/>
            <person name="Courtney L."/>
            <person name="Cloud J."/>
            <person name="Abbott A."/>
            <person name="Scott K."/>
            <person name="Johnson D."/>
            <person name="Minx P."/>
            <person name="Bentley D."/>
            <person name="Fulton B."/>
            <person name="Miller N."/>
            <person name="Greco T."/>
            <person name="Kemp K."/>
            <person name="Kramer J."/>
            <person name="Fulton L."/>
            <person name="Mardis E."/>
            <person name="Dante M."/>
            <person name="Pepin K."/>
            <person name="Hillier L.W."/>
            <person name="Nelson J."/>
            <person name="Spieth J."/>
            <person name="Ryan E."/>
            <person name="Andrews S."/>
            <person name="Geisel C."/>
            <person name="Layman D."/>
            <person name="Du H."/>
            <person name="Ali J."/>
            <person name="Berghoff A."/>
            <person name="Jones K."/>
            <person name="Drone K."/>
            <person name="Cotton M."/>
            <person name="Joshu C."/>
            <person name="Antonoiu B."/>
            <person name="Zidanic M."/>
            <person name="Strong C."/>
            <person name="Sun H."/>
            <person name="Lamar B."/>
            <person name="Yordan C."/>
            <person name="Ma P."/>
            <person name="Zhong J."/>
            <person name="Preston R."/>
            <person name="Vil D."/>
            <person name="Shekher M."/>
            <person name="Matero A."/>
            <person name="Shah R."/>
            <person name="Swaby I.K."/>
            <person name="O'Shaughnessy A."/>
            <person name="Rodriguez M."/>
            <person name="Hoffman J."/>
            <person name="Till S."/>
            <person name="Granat S."/>
            <person name="Shohdy N."/>
            <person name="Hasegawa A."/>
            <person name="Hameed A."/>
            <person name="Lodhi M."/>
            <person name="Johnson A."/>
            <person name="Chen E."/>
            <person name="Marra M.A."/>
            <person name="Martienssen R."/>
            <person name="McCombie W.R."/>
        </authorList>
    </citation>
    <scope>NUCLEOTIDE SEQUENCE [LARGE SCALE GENOMIC DNA]</scope>
    <source>
        <strain>cv. Columbia</strain>
    </source>
</reference>
<reference key="2">
    <citation type="journal article" date="2017" name="Plant J.">
        <title>Araport11: a complete reannotation of the Arabidopsis thaliana reference genome.</title>
        <authorList>
            <person name="Cheng C.Y."/>
            <person name="Krishnakumar V."/>
            <person name="Chan A.P."/>
            <person name="Thibaud-Nissen F."/>
            <person name="Schobel S."/>
            <person name="Town C.D."/>
        </authorList>
    </citation>
    <scope>GENOME REANNOTATION</scope>
    <source>
        <strain>cv. Columbia</strain>
    </source>
</reference>
<reference key="3">
    <citation type="journal article" date="2003" name="Science">
        <title>Empirical analysis of transcriptional activity in the Arabidopsis genome.</title>
        <authorList>
            <person name="Yamada K."/>
            <person name="Lim J."/>
            <person name="Dale J.M."/>
            <person name="Chen H."/>
            <person name="Shinn P."/>
            <person name="Palm C.J."/>
            <person name="Southwick A.M."/>
            <person name="Wu H.C."/>
            <person name="Kim C.J."/>
            <person name="Nguyen M."/>
            <person name="Pham P.K."/>
            <person name="Cheuk R.F."/>
            <person name="Karlin-Newmann G."/>
            <person name="Liu S.X."/>
            <person name="Lam B."/>
            <person name="Sakano H."/>
            <person name="Wu T."/>
            <person name="Yu G."/>
            <person name="Miranda M."/>
            <person name="Quach H.L."/>
            <person name="Tripp M."/>
            <person name="Chang C.H."/>
            <person name="Lee J.M."/>
            <person name="Toriumi M.J."/>
            <person name="Chan M.M."/>
            <person name="Tang C.C."/>
            <person name="Onodera C.S."/>
            <person name="Deng J.M."/>
            <person name="Akiyama K."/>
            <person name="Ansari Y."/>
            <person name="Arakawa T."/>
            <person name="Banh J."/>
            <person name="Banno F."/>
            <person name="Bowser L."/>
            <person name="Brooks S.Y."/>
            <person name="Carninci P."/>
            <person name="Chao Q."/>
            <person name="Choy N."/>
            <person name="Enju A."/>
            <person name="Goldsmith A.D."/>
            <person name="Gurjal M."/>
            <person name="Hansen N.F."/>
            <person name="Hayashizaki Y."/>
            <person name="Johnson-Hopson C."/>
            <person name="Hsuan V.W."/>
            <person name="Iida K."/>
            <person name="Karnes M."/>
            <person name="Khan S."/>
            <person name="Koesema E."/>
            <person name="Ishida J."/>
            <person name="Jiang P.X."/>
            <person name="Jones T."/>
            <person name="Kawai J."/>
            <person name="Kamiya A."/>
            <person name="Meyers C."/>
            <person name="Nakajima M."/>
            <person name="Narusaka M."/>
            <person name="Seki M."/>
            <person name="Sakurai T."/>
            <person name="Satou M."/>
            <person name="Tamse R."/>
            <person name="Vaysberg M."/>
            <person name="Wallender E.K."/>
            <person name="Wong C."/>
            <person name="Yamamura Y."/>
            <person name="Yuan S."/>
            <person name="Shinozaki K."/>
            <person name="Davis R.W."/>
            <person name="Theologis A."/>
            <person name="Ecker J.R."/>
        </authorList>
    </citation>
    <scope>NUCLEOTIDE SEQUENCE [LARGE SCALE MRNA]</scope>
    <source>
        <strain>cv. Columbia</strain>
    </source>
</reference>
<reference key="4">
    <citation type="journal article" date="2010" name="BMC Genomics">
        <title>Genome-wide cloning and sequence analysis of leucine-rich repeat receptor-like protein kinase genes in Arabidopsis thaliana.</title>
        <authorList>
            <person name="Gou X."/>
            <person name="He K."/>
            <person name="Yang H."/>
            <person name="Yuan T."/>
            <person name="Lin H."/>
            <person name="Clouse S.D."/>
            <person name="Li J."/>
        </authorList>
    </citation>
    <scope>NUCLEOTIDE SEQUENCE [LARGE SCALE MRNA]</scope>
    <source>
        <strain>cv. Columbia</strain>
    </source>
</reference>
<reference key="5">
    <citation type="journal article" date="2016" name="Cell Res.">
        <title>RGF1 INSENSITIVE 1 to 5, a group of LRR receptor-like kinases, are essential for the perception of root meristem growth factor 1 in Arabidopsis thaliana.</title>
        <authorList>
            <person name="Ou Y."/>
            <person name="Lu X."/>
            <person name="Zi Q."/>
            <person name="Xun Q."/>
            <person name="Zhang J."/>
            <person name="Wu Y."/>
            <person name="Shi H."/>
            <person name="Wei Z."/>
            <person name="Zhao B."/>
            <person name="Zhang X."/>
            <person name="He K."/>
            <person name="Gou X."/>
            <person name="Li C."/>
            <person name="Li J."/>
        </authorList>
    </citation>
    <scope>FUNCTION</scope>
    <scope>DISRUPTION PHENOTYPE</scope>
</reference>
<reference key="6">
    <citation type="journal article" date="2016" name="Proc. Natl. Acad. Sci. U.S.A.">
        <title>Identification of three LRR-RKs involved in perception of root meristem growth factor in Arabidopsis.</title>
        <authorList>
            <person name="Shinohara H."/>
            <person name="Mori A."/>
            <person name="Yasue N."/>
            <person name="Sumida K."/>
            <person name="Matsubayashi Y."/>
        </authorList>
    </citation>
    <scope>FUNCTION</scope>
    <scope>DISRUPTION PHENOTYPE</scope>
    <scope>INTERACTION WITH RGF1; GLV5/CLEL1/RGF2; GLV7/CLEL3/RGF3; GLV3/RGF4; GLV10/CLEL7/RGF5 AND RGF10/CLELN</scope>
    <scope>TISSUE SPECIFICITY</scope>
    <scope>DEVELOPMENTAL STAGE</scope>
    <source>
        <strain>cv. Columbia</strain>
    </source>
</reference>
<reference key="7">
    <citation type="journal article" date="2016" name="Cell Res.">
        <title>Signature motif-guided identification of receptors for peptide hormones essential for root meristem growth.</title>
        <authorList>
            <person name="Song W."/>
            <person name="Liu L."/>
            <person name="Wang J."/>
            <person name="Wu Z."/>
            <person name="Zhang H."/>
            <person name="Tang J."/>
            <person name="Lin G."/>
            <person name="Wang Y."/>
            <person name="Wen X."/>
            <person name="Li W."/>
            <person name="Han Z."/>
            <person name="Guo H."/>
            <person name="Chai J."/>
        </authorList>
    </citation>
    <scope>X-RAY CRYSTALLOGRAPHY (2.60 ANGSTROMS) OF 57-689 IN COMPLEX WITH SMALL PEPTIDE</scope>
    <scope>FUNCTION</scope>
    <scope>DISRUPTION PHENOTYPE</scope>
    <scope>SUBUNIT</scope>
    <scope>INTERACTION WITH RGF1</scope>
    <scope>TISSUE SPECIFICITY</scope>
    <scope>DEVELOPMENTAL STAGE</scope>
    <scope>GENE FAMILY</scope>
    <scope>NOMENCLATURE</scope>
    <source>
        <strain>cv. Columbia</strain>
    </source>
</reference>
<dbReference type="EC" id="2.7.11.1" evidence="6"/>
<dbReference type="EMBL" id="AL022223">
    <property type="protein sequence ID" value="CAA18216.1"/>
    <property type="status" value="ALT_SEQ"/>
    <property type="molecule type" value="Genomic_DNA"/>
</dbReference>
<dbReference type="EMBL" id="AL161565">
    <property type="protein sequence ID" value="CAB79509.1"/>
    <property type="status" value="ALT_SEQ"/>
    <property type="molecule type" value="Genomic_DNA"/>
</dbReference>
<dbReference type="EMBL" id="CP002687">
    <property type="protein sequence ID" value="AEE85216.1"/>
    <property type="molecule type" value="Genomic_DNA"/>
</dbReference>
<dbReference type="EMBL" id="AF436829">
    <property type="protein sequence ID" value="AAL32011.1"/>
    <property type="status" value="ALT_FRAME"/>
    <property type="molecule type" value="mRNA"/>
</dbReference>
<dbReference type="EMBL" id="FJ708754">
    <property type="protein sequence ID" value="ACN59348.1"/>
    <property type="molecule type" value="mRNA"/>
</dbReference>
<dbReference type="PIR" id="T05050">
    <property type="entry name" value="T05050"/>
</dbReference>
<dbReference type="RefSeq" id="NP_567748.5">
    <property type="nucleotide sequence ID" value="NM_118787.6"/>
</dbReference>
<dbReference type="PDB" id="5HYX">
    <property type="method" value="X-ray"/>
    <property type="resolution" value="2.60 A"/>
    <property type="chains" value="B=57-689"/>
</dbReference>
<dbReference type="PDB" id="5HZ0">
    <property type="method" value="X-ray"/>
    <property type="resolution" value="2.56 A"/>
    <property type="chains" value="B=57-689"/>
</dbReference>
<dbReference type="PDB" id="5HZ1">
    <property type="method" value="X-ray"/>
    <property type="resolution" value="2.59 A"/>
    <property type="chains" value="B=57-689"/>
</dbReference>
<dbReference type="PDB" id="5HZ3">
    <property type="method" value="X-ray"/>
    <property type="resolution" value="2.86 A"/>
    <property type="chains" value="B=57-689"/>
</dbReference>
<dbReference type="PDBsum" id="5HYX"/>
<dbReference type="PDBsum" id="5HZ0"/>
<dbReference type="PDBsum" id="5HZ1"/>
<dbReference type="PDBsum" id="5HZ3"/>
<dbReference type="SMR" id="C0LGR3"/>
<dbReference type="BioGRID" id="14047">
    <property type="interactions" value="44"/>
</dbReference>
<dbReference type="FunCoup" id="C0LGR3">
    <property type="interactions" value="60"/>
</dbReference>
<dbReference type="IntAct" id="C0LGR3">
    <property type="interactions" value="44"/>
</dbReference>
<dbReference type="STRING" id="3702.C0LGR3"/>
<dbReference type="GlyCosmos" id="C0LGR3">
    <property type="glycosylation" value="9 sites, No reported glycans"/>
</dbReference>
<dbReference type="GlyGen" id="C0LGR3">
    <property type="glycosylation" value="9 sites"/>
</dbReference>
<dbReference type="iPTMnet" id="C0LGR3"/>
<dbReference type="PaxDb" id="3702-AT4G26540.1"/>
<dbReference type="ProteomicsDB" id="236934"/>
<dbReference type="EnsemblPlants" id="AT4G26540.1">
    <property type="protein sequence ID" value="AT4G26540.1"/>
    <property type="gene ID" value="AT4G26540"/>
</dbReference>
<dbReference type="GeneID" id="828760"/>
<dbReference type="Gramene" id="AT4G26540.1">
    <property type="protein sequence ID" value="AT4G26540.1"/>
    <property type="gene ID" value="AT4G26540"/>
</dbReference>
<dbReference type="KEGG" id="ath:AT4G26540"/>
<dbReference type="Araport" id="AT4G26540"/>
<dbReference type="TAIR" id="AT4G26540">
    <property type="gene designation" value="RGFR3"/>
</dbReference>
<dbReference type="eggNOG" id="ENOG502QSU9">
    <property type="taxonomic scope" value="Eukaryota"/>
</dbReference>
<dbReference type="HOGENOM" id="CLU_000288_22_1_1"/>
<dbReference type="InParanoid" id="C0LGR3"/>
<dbReference type="OMA" id="LLRWKDT"/>
<dbReference type="PhylomeDB" id="C0LGR3"/>
<dbReference type="PRO" id="PR:C0LGR3"/>
<dbReference type="Proteomes" id="UP000006548">
    <property type="component" value="Chromosome 4"/>
</dbReference>
<dbReference type="ExpressionAtlas" id="C0LGR3">
    <property type="expression patterns" value="baseline and differential"/>
</dbReference>
<dbReference type="GO" id="GO:0005886">
    <property type="term" value="C:plasma membrane"/>
    <property type="evidence" value="ECO:0007669"/>
    <property type="project" value="UniProtKB-SubCell"/>
</dbReference>
<dbReference type="GO" id="GO:0005524">
    <property type="term" value="F:ATP binding"/>
    <property type="evidence" value="ECO:0007669"/>
    <property type="project" value="UniProtKB-KW"/>
</dbReference>
<dbReference type="GO" id="GO:0042277">
    <property type="term" value="F:peptide binding"/>
    <property type="evidence" value="ECO:0000353"/>
    <property type="project" value="UniProtKB"/>
</dbReference>
<dbReference type="GO" id="GO:0001653">
    <property type="term" value="F:peptide receptor activity"/>
    <property type="evidence" value="ECO:0000315"/>
    <property type="project" value="UniProtKB"/>
</dbReference>
<dbReference type="GO" id="GO:0106310">
    <property type="term" value="F:protein serine kinase activity"/>
    <property type="evidence" value="ECO:0007669"/>
    <property type="project" value="RHEA"/>
</dbReference>
<dbReference type="GO" id="GO:0004674">
    <property type="term" value="F:protein serine/threonine kinase activity"/>
    <property type="evidence" value="ECO:0007669"/>
    <property type="project" value="UniProtKB-KW"/>
</dbReference>
<dbReference type="GO" id="GO:0010074">
    <property type="term" value="P:maintenance of meristem identity"/>
    <property type="evidence" value="ECO:0000315"/>
    <property type="project" value="UniProtKB"/>
</dbReference>
<dbReference type="GO" id="GO:0010078">
    <property type="term" value="P:maintenance of root meristem identity"/>
    <property type="evidence" value="ECO:0000315"/>
    <property type="project" value="UniProtKB"/>
</dbReference>
<dbReference type="GO" id="GO:2000280">
    <property type="term" value="P:regulation of root development"/>
    <property type="evidence" value="ECO:0000315"/>
    <property type="project" value="UniProtKB"/>
</dbReference>
<dbReference type="GO" id="GO:0010082">
    <property type="term" value="P:regulation of root meristem growth"/>
    <property type="evidence" value="ECO:0000316"/>
    <property type="project" value="TAIR"/>
</dbReference>
<dbReference type="FunFam" id="3.80.10.10:FF:001034">
    <property type="entry name" value="Leucine-rich receptor-like protein kinase family protein"/>
    <property type="match status" value="1"/>
</dbReference>
<dbReference type="FunFam" id="1.10.510.10:FF:000276">
    <property type="entry name" value="LRR receptor-like serine/threonine-protein kinase RCH1"/>
    <property type="match status" value="1"/>
</dbReference>
<dbReference type="FunFam" id="3.80.10.10:FF:000400">
    <property type="entry name" value="Nuclear pore complex protein NUP107"/>
    <property type="match status" value="1"/>
</dbReference>
<dbReference type="FunFam" id="3.80.10.10:FF:000775">
    <property type="entry name" value="Predicted protein"/>
    <property type="match status" value="1"/>
</dbReference>
<dbReference type="FunFam" id="3.30.200.20:FF:000642">
    <property type="entry name" value="Putative LRR receptor-like serine/threonine-protein kinase"/>
    <property type="match status" value="1"/>
</dbReference>
<dbReference type="FunFam" id="3.80.10.10:FF:000270">
    <property type="entry name" value="Putative LRR receptor-like serine/threonine-protein kinase"/>
    <property type="match status" value="1"/>
</dbReference>
<dbReference type="Gene3D" id="3.30.200.20">
    <property type="entry name" value="Phosphorylase Kinase, domain 1"/>
    <property type="match status" value="1"/>
</dbReference>
<dbReference type="Gene3D" id="3.80.10.10">
    <property type="entry name" value="Ribonuclease Inhibitor"/>
    <property type="match status" value="7"/>
</dbReference>
<dbReference type="Gene3D" id="1.10.510.10">
    <property type="entry name" value="Transferase(Phosphotransferase) domain 1"/>
    <property type="match status" value="1"/>
</dbReference>
<dbReference type="InterPro" id="IPR011009">
    <property type="entry name" value="Kinase-like_dom_sf"/>
</dbReference>
<dbReference type="InterPro" id="IPR001611">
    <property type="entry name" value="Leu-rich_rpt"/>
</dbReference>
<dbReference type="InterPro" id="IPR003591">
    <property type="entry name" value="Leu-rich_rpt_typical-subtyp"/>
</dbReference>
<dbReference type="InterPro" id="IPR032675">
    <property type="entry name" value="LRR_dom_sf"/>
</dbReference>
<dbReference type="InterPro" id="IPR013210">
    <property type="entry name" value="LRR_N_plant-typ"/>
</dbReference>
<dbReference type="InterPro" id="IPR055414">
    <property type="entry name" value="LRR_R13L4/SHOC2-like"/>
</dbReference>
<dbReference type="InterPro" id="IPR051716">
    <property type="entry name" value="Plant_RL_S/T_kinase"/>
</dbReference>
<dbReference type="InterPro" id="IPR000719">
    <property type="entry name" value="Prot_kinase_dom"/>
</dbReference>
<dbReference type="InterPro" id="IPR017441">
    <property type="entry name" value="Protein_kinase_ATP_BS"/>
</dbReference>
<dbReference type="InterPro" id="IPR008271">
    <property type="entry name" value="Ser/Thr_kinase_AS"/>
</dbReference>
<dbReference type="PANTHER" id="PTHR48053">
    <property type="entry name" value="LEUCINE RICH REPEAT FAMILY PROTEIN, EXPRESSED"/>
    <property type="match status" value="1"/>
</dbReference>
<dbReference type="PANTHER" id="PTHR48053:SF165">
    <property type="entry name" value="RECEPTOR-LIKE PROTEIN KINASE 2 ISOFORM X2"/>
    <property type="match status" value="1"/>
</dbReference>
<dbReference type="Pfam" id="PF00560">
    <property type="entry name" value="LRR_1"/>
    <property type="match status" value="6"/>
</dbReference>
<dbReference type="Pfam" id="PF23598">
    <property type="entry name" value="LRR_14"/>
    <property type="match status" value="1"/>
</dbReference>
<dbReference type="Pfam" id="PF13855">
    <property type="entry name" value="LRR_8"/>
    <property type="match status" value="2"/>
</dbReference>
<dbReference type="Pfam" id="PF08263">
    <property type="entry name" value="LRRNT_2"/>
    <property type="match status" value="1"/>
</dbReference>
<dbReference type="Pfam" id="PF00069">
    <property type="entry name" value="Pkinase"/>
    <property type="match status" value="1"/>
</dbReference>
<dbReference type="SMART" id="SM00365">
    <property type="entry name" value="LRR_SD22"/>
    <property type="match status" value="7"/>
</dbReference>
<dbReference type="SMART" id="SM00369">
    <property type="entry name" value="LRR_TYP"/>
    <property type="match status" value="8"/>
</dbReference>
<dbReference type="SMART" id="SM00220">
    <property type="entry name" value="S_TKc"/>
    <property type="match status" value="1"/>
</dbReference>
<dbReference type="SUPFAM" id="SSF56112">
    <property type="entry name" value="Protein kinase-like (PK-like)"/>
    <property type="match status" value="1"/>
</dbReference>
<dbReference type="SUPFAM" id="SSF52047">
    <property type="entry name" value="RNI-like"/>
    <property type="match status" value="2"/>
</dbReference>
<dbReference type="PROSITE" id="PS00107">
    <property type="entry name" value="PROTEIN_KINASE_ATP"/>
    <property type="match status" value="1"/>
</dbReference>
<dbReference type="PROSITE" id="PS50011">
    <property type="entry name" value="PROTEIN_KINASE_DOM"/>
    <property type="match status" value="1"/>
</dbReference>
<dbReference type="PROSITE" id="PS00108">
    <property type="entry name" value="PROTEIN_KINASE_ST"/>
    <property type="match status" value="1"/>
</dbReference>
<evidence type="ECO:0000250" key="1">
    <source>
        <dbReference type="UniProtKB" id="C0LGT6"/>
    </source>
</evidence>
<evidence type="ECO:0000250" key="2">
    <source>
        <dbReference type="UniProtKB" id="O22476"/>
    </source>
</evidence>
<evidence type="ECO:0000250" key="3">
    <source>
        <dbReference type="UniProtKB" id="Q94AG2"/>
    </source>
</evidence>
<evidence type="ECO:0000250" key="4">
    <source>
        <dbReference type="UniProtKB" id="Q9LHP4"/>
    </source>
</evidence>
<evidence type="ECO:0000255" key="5"/>
<evidence type="ECO:0000255" key="6">
    <source>
        <dbReference type="PROSITE-ProRule" id="PRU00159"/>
    </source>
</evidence>
<evidence type="ECO:0000255" key="7">
    <source>
        <dbReference type="PROSITE-ProRule" id="PRU00498"/>
    </source>
</evidence>
<evidence type="ECO:0000255" key="8">
    <source>
        <dbReference type="PROSITE-ProRule" id="PRU10027"/>
    </source>
</evidence>
<evidence type="ECO:0000269" key="9">
    <source>
    </source>
</evidence>
<evidence type="ECO:0000269" key="10">
    <source>
    </source>
</evidence>
<evidence type="ECO:0000269" key="11">
    <source>
    </source>
</evidence>
<evidence type="ECO:0000303" key="12">
    <source>
    </source>
</evidence>
<evidence type="ECO:0000303" key="13">
    <source>
    </source>
</evidence>
<evidence type="ECO:0000303" key="14">
    <source>
    </source>
</evidence>
<evidence type="ECO:0000305" key="15"/>
<evidence type="ECO:0000312" key="16">
    <source>
        <dbReference type="Araport" id="AT4G26540"/>
    </source>
</evidence>
<evidence type="ECO:0000312" key="17">
    <source>
        <dbReference type="EMBL" id="CAA18216.1"/>
    </source>
</evidence>
<evidence type="ECO:0007744" key="18">
    <source>
        <dbReference type="PDB" id="5HYX"/>
    </source>
</evidence>
<evidence type="ECO:0007744" key="19">
    <source>
        <dbReference type="PDB" id="5HZ0"/>
    </source>
</evidence>
<evidence type="ECO:0007744" key="20">
    <source>
        <dbReference type="PDB" id="5HZ1"/>
    </source>
</evidence>
<evidence type="ECO:0007744" key="21">
    <source>
        <dbReference type="PDB" id="5HZ3"/>
    </source>
</evidence>
<evidence type="ECO:0007829" key="22">
    <source>
        <dbReference type="PDB" id="5HYX"/>
    </source>
</evidence>
<evidence type="ECO:0007829" key="23">
    <source>
        <dbReference type="PDB" id="5HZ0"/>
    </source>
</evidence>
<evidence type="ECO:0007829" key="24">
    <source>
        <dbReference type="PDB" id="5HZ1"/>
    </source>
</evidence>
<evidence type="ECO:0007829" key="25">
    <source>
        <dbReference type="PDB" id="5HZ3"/>
    </source>
</evidence>
<gene>
    <name evidence="14" type="primary">RGI3</name>
    <name evidence="13" type="synonym">RGFR1</name>
    <name evidence="12" type="synonym">RGFR3</name>
    <name evidence="16" type="ordered locus">At4g26540</name>
    <name evidence="17" type="ORF">M3E9.30</name>
</gene>
<comment type="function">
    <text evidence="9 10 11">Together with RGI1, RGI2, RGI4 and RGI5, acts as a receptor of RGF peptides (e.g. RGF1, GLV5/CLEL1/RGF2, GLV7/CLEL3/RGF3, GLV3/RGF4, GLV10/CLEL7/RGF5 and RGF10/CLELN), peptide hormones which maintain the postembryonic root stem cell niche by regulating the expression levels and patterns of the transcription factor PLETHORA (PLT, e.g. PLT1 and PLT2) (PubMed:27001831, PubMed:27229311, PubMed:27229312). Links RGF peptides signal with their downstream components (PubMed:27001831, PubMed:27229311).</text>
</comment>
<comment type="catalytic activity">
    <reaction evidence="6">
        <text>L-seryl-[protein] + ATP = O-phospho-L-seryl-[protein] + ADP + H(+)</text>
        <dbReference type="Rhea" id="RHEA:17989"/>
        <dbReference type="Rhea" id="RHEA-COMP:9863"/>
        <dbReference type="Rhea" id="RHEA-COMP:11604"/>
        <dbReference type="ChEBI" id="CHEBI:15378"/>
        <dbReference type="ChEBI" id="CHEBI:29999"/>
        <dbReference type="ChEBI" id="CHEBI:30616"/>
        <dbReference type="ChEBI" id="CHEBI:83421"/>
        <dbReference type="ChEBI" id="CHEBI:456216"/>
        <dbReference type="EC" id="2.7.11.1"/>
    </reaction>
</comment>
<comment type="catalytic activity">
    <reaction evidence="6">
        <text>L-threonyl-[protein] + ATP = O-phospho-L-threonyl-[protein] + ADP + H(+)</text>
        <dbReference type="Rhea" id="RHEA:46608"/>
        <dbReference type="Rhea" id="RHEA-COMP:11060"/>
        <dbReference type="Rhea" id="RHEA-COMP:11605"/>
        <dbReference type="ChEBI" id="CHEBI:15378"/>
        <dbReference type="ChEBI" id="CHEBI:30013"/>
        <dbReference type="ChEBI" id="CHEBI:30616"/>
        <dbReference type="ChEBI" id="CHEBI:61977"/>
        <dbReference type="ChEBI" id="CHEBI:456216"/>
        <dbReference type="EC" id="2.7.11.1"/>
    </reaction>
</comment>
<comment type="subunit">
    <text evidence="9 10">Binds to RGF peptides such as RGF1, GLV5/CLEL1/RGF2, GLV7/CLEL3/RGF3, GLV3/RGF4, GLV10/CLEL7/RGF5 and RGF10/CLELN; these interactions trigger the formation of heterodimers with SERK1, SERK2 or BAK1/SERK3 via LRR regions.</text>
</comment>
<comment type="interaction">
    <interactant intactId="EBI-20659695">
        <id>C0LGR3</id>
    </interactant>
    <interactant intactId="EBI-20651225">
        <id>C0LGI5</id>
        <label>At1g69990</label>
    </interactant>
    <organismsDiffer>false</organismsDiffer>
    <experiments>3</experiments>
</comment>
<comment type="subcellular location">
    <subcellularLocation>
        <location evidence="5">Cell membrane</location>
        <topology evidence="5">Single-pass type I membrane protein</topology>
    </subcellularLocation>
</comment>
<comment type="tissue specificity">
    <text evidence="9 10">Expressed in roots.</text>
</comment>
<comment type="developmental stage">
    <text evidence="9 10">In roots, detected in the more basal region of the elongation zone and the differentiation zone, mainly restricted to columella, transition zone and root stem cell niche.</text>
</comment>
<comment type="PTM">
    <text evidence="4">Phosphorylated and ubiquitinated upon interaction with RGF1, thus leading to activation a subsequent degradation.</text>
</comment>
<comment type="PTM">
    <text evidence="2">Autophosphorylated.</text>
</comment>
<comment type="disruption phenotype">
    <text evidence="9 10 11">Smaller root meristem size and fewer root meristematic cortex cells, associated with shorter roots and a slighty reduced sensitivity to RGF1 (PubMed:27229311). Quintuple mutants rgi1 rgi2 rgi3 rgi4 rgi5 display a consistent short primary root phenotype with a small size of meristem associated with a total insensitivity to RGF1 and undetectable levels of PLT1 and PLT2 (PubMed:27229312). The triple mutant missing RGI1, RGI2 and RGI3 is insensitive to externally applied RGF peptides (e.g. RGF1 and RGF2) and has short roots characterized by a strong decrease in meristematic cell number and declined levels of PLT1 and PLT2 at the root tip (PubMed:27001831).</text>
</comment>
<comment type="similarity">
    <text evidence="6">Belongs to the protein kinase superfamily. Ser/Thr protein kinase family.</text>
</comment>
<comment type="sequence caution" evidence="15">
    <conflict type="frameshift">
        <sequence resource="EMBL-CDS" id="AAL32011"/>
    </conflict>
</comment>
<comment type="sequence caution" evidence="15">
    <conflict type="erroneous gene model prediction">
        <sequence resource="EMBL-CDS" id="CAA18216"/>
    </conflict>
</comment>
<comment type="sequence caution" evidence="15">
    <conflict type="frameshift">
        <sequence resource="EMBL-CDS" id="CAA18216"/>
    </conflict>
</comment>
<comment type="sequence caution" evidence="15">
    <conflict type="erroneous gene model prediction">
        <sequence resource="EMBL-CDS" id="CAB79509"/>
    </conflict>
</comment>
<comment type="sequence caution" evidence="15">
    <conflict type="frameshift">
        <sequence resource="EMBL-CDS" id="CAB79509"/>
    </conflict>
</comment>
<feature type="signal peptide" evidence="5">
    <location>
        <begin position="1"/>
        <end position="24"/>
    </location>
</feature>
<feature type="chain" id="PRO_0000387553" description="LRR receptor-like serine/threonine-protein kinase RGI3">
    <location>
        <begin position="25"/>
        <end position="1091"/>
    </location>
</feature>
<feature type="topological domain" description="Extracellular" evidence="5">
    <location>
        <begin position="25"/>
        <end position="703"/>
    </location>
</feature>
<feature type="transmembrane region" description="Helical" evidence="5">
    <location>
        <begin position="704"/>
        <end position="724"/>
    </location>
</feature>
<feature type="topological domain" description="Cytoplasmic" evidence="5">
    <location>
        <begin position="725"/>
        <end position="1091"/>
    </location>
</feature>
<feature type="repeat" description="LRR 1" evidence="5">
    <location>
        <begin position="33"/>
        <end position="56"/>
    </location>
</feature>
<feature type="repeat" description="LRR 2" evidence="5">
    <location>
        <begin position="67"/>
        <end position="91"/>
    </location>
</feature>
<feature type="repeat" description="LRR 3" evidence="5">
    <location>
        <begin position="92"/>
        <end position="115"/>
    </location>
</feature>
<feature type="repeat" description="LRR 4" evidence="5">
    <location>
        <begin position="116"/>
        <end position="140"/>
    </location>
</feature>
<feature type="repeat" description="LRR 5" evidence="5">
    <location>
        <begin position="142"/>
        <end position="166"/>
    </location>
</feature>
<feature type="repeat" description="LRR 6" evidence="5">
    <location>
        <begin position="168"/>
        <end position="188"/>
    </location>
</feature>
<feature type="repeat" description="LRR 7" evidence="5">
    <location>
        <begin position="190"/>
        <end position="213"/>
    </location>
</feature>
<feature type="repeat" description="LRR 8" evidence="5">
    <location>
        <begin position="214"/>
        <end position="237"/>
    </location>
</feature>
<feature type="repeat" description="LRR 9" evidence="5">
    <location>
        <begin position="239"/>
        <end position="261"/>
    </location>
</feature>
<feature type="repeat" description="LRR 10" evidence="5">
    <location>
        <begin position="262"/>
        <end position="285"/>
    </location>
</feature>
<feature type="repeat" description="LRR 11" evidence="5">
    <location>
        <begin position="287"/>
        <end position="309"/>
    </location>
</feature>
<feature type="repeat" description="LRR 12" evidence="5">
    <location>
        <begin position="311"/>
        <end position="332"/>
    </location>
</feature>
<feature type="repeat" description="LRR 13" evidence="5">
    <location>
        <begin position="333"/>
        <end position="357"/>
    </location>
</feature>
<feature type="repeat" description="LRR 14" evidence="5">
    <location>
        <begin position="359"/>
        <end position="383"/>
    </location>
</feature>
<feature type="repeat" description="LRR 15" evidence="5">
    <location>
        <begin position="385"/>
        <end position="405"/>
    </location>
</feature>
<feature type="repeat" description="LRR 16" evidence="5">
    <location>
        <begin position="406"/>
        <end position="429"/>
    </location>
</feature>
<feature type="repeat" description="LRR 17" evidence="5">
    <location>
        <begin position="431"/>
        <end position="453"/>
    </location>
</feature>
<feature type="repeat" description="LRR 18" evidence="5">
    <location>
        <begin position="454"/>
        <end position="477"/>
    </location>
</feature>
<feature type="repeat" description="LRR 19" evidence="5">
    <location>
        <begin position="478"/>
        <end position="501"/>
    </location>
</feature>
<feature type="repeat" description="LRR 20" evidence="5">
    <location>
        <begin position="503"/>
        <end position="524"/>
    </location>
</feature>
<feature type="repeat" description="LRR 21" evidence="5">
    <location>
        <begin position="525"/>
        <end position="548"/>
    </location>
</feature>
<feature type="repeat" description="LRR 22" evidence="5">
    <location>
        <begin position="549"/>
        <end position="572"/>
    </location>
</feature>
<feature type="repeat" description="LRR 23" evidence="5">
    <location>
        <begin position="574"/>
        <end position="596"/>
    </location>
</feature>
<feature type="repeat" description="LRR 24" evidence="5">
    <location>
        <begin position="598"/>
        <end position="620"/>
    </location>
</feature>
<feature type="repeat" description="LRR 25" evidence="5">
    <location>
        <begin position="621"/>
        <end position="644"/>
    </location>
</feature>
<feature type="repeat" description="LRR 26" evidence="5">
    <location>
        <begin position="645"/>
        <end position="668"/>
    </location>
</feature>
<feature type="repeat" description="LRR 27" evidence="5">
    <location>
        <begin position="669"/>
        <end position="690"/>
    </location>
</feature>
<feature type="domain" description="Protein kinase" evidence="6">
    <location>
        <begin position="760"/>
        <end position="1046"/>
    </location>
</feature>
<feature type="short sequence motif" description="Small peptide recognition" evidence="10 18 19 20 21">
    <location>
        <begin position="173"/>
        <end position="174"/>
    </location>
</feature>
<feature type="short sequence motif" description="Small peptide recognition" evidence="10 18 19 20 21">
    <location>
        <begin position="195"/>
        <end position="198"/>
    </location>
</feature>
<feature type="short sequence motif" description="Small peptide recognition" evidence="10 18 19 20 21">
    <location>
        <begin position="218"/>
        <end position="223"/>
    </location>
</feature>
<feature type="short sequence motif" description="Small peptide recognition" evidence="10 18 19 20 21">
    <location>
        <position position="246"/>
    </location>
</feature>
<feature type="short sequence motif" description="Small peptide recognition" evidence="10 18 19 20 21">
    <location>
        <begin position="268"/>
        <end position="270"/>
    </location>
</feature>
<feature type="short sequence motif" description="Small peptide recognition" evidence="10 18 19 20 21">
    <location>
        <begin position="316"/>
        <end position="319"/>
    </location>
</feature>
<feature type="short sequence motif" description="Small peptide recognition" evidence="10 18 19 20 21">
    <location>
        <begin position="338"/>
        <end position="340"/>
    </location>
</feature>
<feature type="short sequence motif" description="Small peptide recognition" evidence="10 18 19 20 21">
    <location>
        <begin position="386"/>
        <end position="390"/>
    </location>
</feature>
<feature type="short sequence motif" description="Small peptide recognition" evidence="10 18 19 20 21">
    <location>
        <begin position="412"/>
        <end position="415"/>
    </location>
</feature>
<feature type="short sequence motif" description="Small peptide recognition" evidence="10 18 19 20 21">
    <location>
        <begin position="434"/>
        <end position="438"/>
    </location>
</feature>
<feature type="short sequence motif" description="Small peptide recognition" evidence="10 18 19 20 21">
    <location>
        <begin position="458"/>
        <end position="460"/>
    </location>
</feature>
<feature type="active site" description="Proton acceptor" evidence="6 8">
    <location>
        <position position="883"/>
    </location>
</feature>
<feature type="binding site" evidence="6">
    <location>
        <begin position="766"/>
        <end position="774"/>
    </location>
    <ligand>
        <name>ATP</name>
        <dbReference type="ChEBI" id="CHEBI:30616"/>
    </ligand>
</feature>
<feature type="binding site" evidence="6">
    <location>
        <position position="788"/>
    </location>
    <ligand>
        <name>ATP</name>
        <dbReference type="ChEBI" id="CHEBI:30616"/>
    </ligand>
</feature>
<feature type="site" description="Essential for autophosphorylation activity" evidence="4">
    <location>
        <position position="788"/>
    </location>
</feature>
<feature type="modified residue" description="Phosphotyrosine" evidence="2">
    <location>
        <position position="831"/>
    </location>
</feature>
<feature type="modified residue" description="Phosphotyrosine" evidence="1">
    <location>
        <position position="870"/>
    </location>
</feature>
<feature type="modified residue" description="Phosphotyrosine" evidence="1">
    <location>
        <position position="933"/>
    </location>
</feature>
<feature type="glycosylation site" description="N-linked (GlcNAc...) asparagine" evidence="7">
    <location>
        <position position="40"/>
    </location>
</feature>
<feature type="glycosylation site" description="N-linked (GlcNAc...) asparagine" evidence="7">
    <location>
        <position position="104"/>
    </location>
</feature>
<feature type="glycosylation site" description="N-linked (GlcNAc...) asparagine" evidence="7">
    <location>
        <position position="163"/>
    </location>
</feature>
<feature type="glycosylation site" description="N-linked (GlcNAc...) asparagine" evidence="7">
    <location>
        <position position="356"/>
    </location>
</feature>
<feature type="glycosylation site" description="N-linked (GlcNAc...) asparagine" evidence="7">
    <location>
        <position position="431"/>
    </location>
</feature>
<feature type="glycosylation site" description="N-linked (GlcNAc...) asparagine" evidence="7">
    <location>
        <position position="452"/>
    </location>
</feature>
<feature type="glycosylation site" description="N-linked (GlcNAc...) asparagine" evidence="7">
    <location>
        <position position="604"/>
    </location>
</feature>
<feature type="glycosylation site" description="N-linked (GlcNAc...) asparagine" evidence="7">
    <location>
        <position position="651"/>
    </location>
</feature>
<feature type="glycosylation site" description="N-linked (GlcNAc...) asparagine" evidence="7">
    <location>
        <position position="697"/>
    </location>
</feature>
<feature type="disulfide bond" evidence="3">
    <location>
        <begin position="57"/>
        <end position="64"/>
    </location>
</feature>
<feature type="sequence conflict" description="In Ref. 3; AAL32011." evidence="15" ref="3">
    <original>L</original>
    <variation>P</variation>
    <location>
        <position position="221"/>
    </location>
</feature>
<feature type="strand" evidence="23">
    <location>
        <begin position="59"/>
        <end position="64"/>
    </location>
</feature>
<feature type="strand" evidence="23">
    <location>
        <begin position="68"/>
        <end position="77"/>
    </location>
</feature>
<feature type="strand" evidence="23">
    <location>
        <begin position="97"/>
        <end position="103"/>
    </location>
</feature>
<feature type="helix" evidence="23">
    <location>
        <begin position="111"/>
        <end position="115"/>
    </location>
</feature>
<feature type="strand" evidence="23">
    <location>
        <begin position="121"/>
        <end position="123"/>
    </location>
</feature>
<feature type="helix" evidence="23">
    <location>
        <begin position="135"/>
        <end position="139"/>
    </location>
</feature>
<feature type="strand" evidence="23">
    <location>
        <begin position="144"/>
        <end position="147"/>
    </location>
</feature>
<feature type="helix" evidence="23">
    <location>
        <begin position="159"/>
        <end position="163"/>
    </location>
</feature>
<feature type="strand" evidence="23">
    <location>
        <begin position="169"/>
        <end position="171"/>
    </location>
</feature>
<feature type="strand" evidence="22">
    <location>
        <begin position="178"/>
        <end position="180"/>
    </location>
</feature>
<feature type="helix" evidence="23">
    <location>
        <begin position="183"/>
        <end position="187"/>
    </location>
</feature>
<feature type="strand" evidence="23">
    <location>
        <begin position="193"/>
        <end position="195"/>
    </location>
</feature>
<feature type="strand" evidence="23">
    <location>
        <begin position="201"/>
        <end position="205"/>
    </location>
</feature>
<feature type="helix" evidence="23">
    <location>
        <begin position="208"/>
        <end position="212"/>
    </location>
</feature>
<feature type="strand" evidence="23">
    <location>
        <begin position="218"/>
        <end position="220"/>
    </location>
</feature>
<feature type="strand" evidence="23">
    <location>
        <begin position="223"/>
        <end position="228"/>
    </location>
</feature>
<feature type="helix" evidence="23">
    <location>
        <begin position="232"/>
        <end position="236"/>
    </location>
</feature>
<feature type="strand" evidence="23">
    <location>
        <begin position="242"/>
        <end position="244"/>
    </location>
</feature>
<feature type="strand" evidence="23">
    <location>
        <begin position="247"/>
        <end position="250"/>
    </location>
</feature>
<feature type="helix" evidence="23">
    <location>
        <begin position="256"/>
        <end position="260"/>
    </location>
</feature>
<feature type="strand" evidence="23">
    <location>
        <begin position="266"/>
        <end position="268"/>
    </location>
</feature>
<feature type="strand" evidence="24">
    <location>
        <begin position="271"/>
        <end position="274"/>
    </location>
</feature>
<feature type="helix" evidence="23">
    <location>
        <begin position="280"/>
        <end position="284"/>
    </location>
</feature>
<feature type="strand" evidence="23">
    <location>
        <begin position="290"/>
        <end position="292"/>
    </location>
</feature>
<feature type="strand" evidence="22">
    <location>
        <begin position="299"/>
        <end position="301"/>
    </location>
</feature>
<feature type="helix" evidence="23">
    <location>
        <begin position="304"/>
        <end position="308"/>
    </location>
</feature>
<feature type="strand" evidence="23">
    <location>
        <begin position="314"/>
        <end position="316"/>
    </location>
</feature>
<feature type="strand" evidence="23">
    <location>
        <begin position="323"/>
        <end position="325"/>
    </location>
</feature>
<feature type="helix" evidence="23">
    <location>
        <begin position="328"/>
        <end position="332"/>
    </location>
</feature>
<feature type="strand" evidence="23">
    <location>
        <begin position="338"/>
        <end position="340"/>
    </location>
</feature>
<feature type="strand" evidence="25">
    <location>
        <begin position="347"/>
        <end position="349"/>
    </location>
</feature>
<feature type="helix" evidence="23">
    <location>
        <begin position="352"/>
        <end position="356"/>
    </location>
</feature>
<feature type="strand" evidence="23">
    <location>
        <begin position="362"/>
        <end position="364"/>
    </location>
</feature>
<feature type="helix" evidence="23">
    <location>
        <begin position="376"/>
        <end position="380"/>
    </location>
</feature>
<feature type="strand" evidence="23">
    <location>
        <begin position="386"/>
        <end position="388"/>
    </location>
</feature>
<feature type="strand" evidence="23">
    <location>
        <begin position="391"/>
        <end position="396"/>
    </location>
</feature>
<feature type="helix" evidence="23">
    <location>
        <begin position="400"/>
        <end position="404"/>
    </location>
</feature>
<feature type="strand" evidence="23">
    <location>
        <begin position="410"/>
        <end position="412"/>
    </location>
</feature>
<feature type="strand" evidence="23">
    <location>
        <begin position="415"/>
        <end position="418"/>
    </location>
</feature>
<feature type="helix" evidence="23">
    <location>
        <begin position="424"/>
        <end position="428"/>
    </location>
</feature>
<feature type="strand" evidence="23">
    <location>
        <begin position="434"/>
        <end position="436"/>
    </location>
</feature>
<feature type="strand" evidence="24">
    <location>
        <begin position="439"/>
        <end position="444"/>
    </location>
</feature>
<feature type="helix" evidence="23">
    <location>
        <begin position="448"/>
        <end position="452"/>
    </location>
</feature>
<feature type="strand" evidence="23">
    <location>
        <begin position="458"/>
        <end position="460"/>
    </location>
</feature>
<feature type="strand" evidence="24">
    <location>
        <begin position="463"/>
        <end position="466"/>
    </location>
</feature>
<feature type="helix" evidence="23">
    <location>
        <begin position="472"/>
        <end position="476"/>
    </location>
</feature>
<feature type="strand" evidence="23">
    <location>
        <begin position="482"/>
        <end position="484"/>
    </location>
</feature>
<feature type="strand" evidence="23">
    <location>
        <begin position="487"/>
        <end position="490"/>
    </location>
</feature>
<feature type="helix" evidence="23">
    <location>
        <begin position="496"/>
        <end position="500"/>
    </location>
</feature>
<feature type="strand" evidence="23">
    <location>
        <begin position="506"/>
        <end position="508"/>
    </location>
</feature>
<feature type="helix" evidence="23">
    <location>
        <begin position="520"/>
        <end position="522"/>
    </location>
</feature>
<feature type="strand" evidence="23">
    <location>
        <begin position="529"/>
        <end position="531"/>
    </location>
</feature>
<feature type="strand" evidence="23">
    <location>
        <begin position="534"/>
        <end position="537"/>
    </location>
</feature>
<feature type="strand" evidence="25">
    <location>
        <begin position="538"/>
        <end position="540"/>
    </location>
</feature>
<feature type="helix" evidence="23">
    <location>
        <begin position="543"/>
        <end position="547"/>
    </location>
</feature>
<feature type="strand" evidence="23">
    <location>
        <begin position="553"/>
        <end position="555"/>
    </location>
</feature>
<feature type="helix" evidence="23">
    <location>
        <begin position="567"/>
        <end position="571"/>
    </location>
</feature>
<feature type="strand" evidence="23">
    <location>
        <begin position="577"/>
        <end position="579"/>
    </location>
</feature>
<feature type="strand" evidence="23">
    <location>
        <begin position="582"/>
        <end position="585"/>
    </location>
</feature>
<feature type="strand" evidence="24">
    <location>
        <begin position="586"/>
        <end position="588"/>
    </location>
</feature>
<feature type="helix" evidence="23">
    <location>
        <begin position="591"/>
        <end position="595"/>
    </location>
</feature>
<feature type="strand" evidence="23">
    <location>
        <begin position="601"/>
        <end position="604"/>
    </location>
</feature>
<feature type="strand" evidence="23">
    <location>
        <begin position="611"/>
        <end position="613"/>
    </location>
</feature>
<feature type="helix" evidence="23">
    <location>
        <begin position="616"/>
        <end position="620"/>
    </location>
</feature>
<feature type="strand" evidence="23">
    <location>
        <begin position="626"/>
        <end position="628"/>
    </location>
</feature>
<feature type="helix" evidence="23">
    <location>
        <begin position="639"/>
        <end position="641"/>
    </location>
</feature>
<feature type="strand" evidence="23">
    <location>
        <begin position="649"/>
        <end position="651"/>
    </location>
</feature>
<feature type="strand" evidence="23">
    <location>
        <begin position="658"/>
        <end position="661"/>
    </location>
</feature>
<feature type="helix" evidence="23">
    <location>
        <begin position="665"/>
        <end position="669"/>
    </location>
</feature>
<feature type="helix" evidence="23">
    <location>
        <begin position="672"/>
        <end position="676"/>
    </location>
</feature>
<feature type="strand" evidence="23">
    <location>
        <begin position="678"/>
        <end position="683"/>
    </location>
</feature>
<proteinExistence type="evidence at protein level"/>
<protein>
    <recommendedName>
        <fullName evidence="15">LRR receptor-like serine/threonine-protein kinase RGI3</fullName>
        <ecNumber evidence="6">2.7.11.1</ecNumber>
    </recommendedName>
    <alternativeName>
        <fullName evidence="13">Protein RECEPTOR OF RGF1 1</fullName>
    </alternativeName>
    <alternativeName>
        <fullName evidence="14">Protein RGF1 INSENSITIVE 3</fullName>
    </alternativeName>
</protein>
<sequence length="1091" mass="119529">MPPNIYRLSFFSSLLCFFFIPCFSLDQQGQALLSWKSQLNISGDAFSSWHVADTSPCNWVGVKCNRRGEVSEIQLKGMDLQGSLPVTSLRSLKSLTSLTLSSLNLTGVIPKEIGDFTELELLDLSDNSLSGDIPVEIFRLKKLKTLSLNTNNLEGHIPMEIGNLSGLVELMLFDNKLSGEIPRSIGELKNLQVLRAGGNKNLRGELPWEIGNCENLVMLGLAETSLSGKLPASIGNLKRVQTIAIYTSLLSGPIPDEIGYCTELQNLYLYQNSISGSIPTTIGGLKKLQSLLLWQNNLVGKIPTELGNCPELWLIDFSENLLTGTIPRSFGKLENLQELQLSVNQISGTIPEELTNCTKLTHLEIDNNLITGEIPSLMSNLRSLTMFFAWQNKLTGNIPQSLSQCRELQAIDLSYNSLSGSIPKEIFGLRNLTKLLLLSNDLSGFIPPDIGNCTNLYRLRLNGNRLAGSIPSEIGNLKNLNFVDISENRLVGSIPPAISGCESLEFLDLHTNSLSGSLLGTTLPKSLKFIDFSDNALSSTLPPGIGLLTELTKLNLAKNRLSGEIPREISTCRSLQLLNLGENDFSGEIPDELGQIPSLAISLNLSCNRFVGEIPSRFSDLKNLGVLDVSHNQLTGNLNVLTDLQNLVSLNISYNDFSGDLPNTPFFRRLPLSDLASNRGLYISNAISTRPDPTTRNSSVVRLTILILVVVTAVLVLMAVYTLVRARAAGKQLLGEEIDSWEVTLYQKLDFSIDDIVKNLTSANVIGTGSSGVVYRITIPSGESLAVKKMWSKEESGAFNSEIKTLGSIRHRNIVRLLGWCSNRNLKLLFYDYLPNGSLSSRLHGAGKGGCVDWEARYDVVLGVAHALAYLHHDCLPTIIHGDVKAMNVLLGPHFEPYLADFGLARTISGYPNTGIDLAKPTNRPPMAGSYGYMAPEHASMQRITEKSDVYSYGVVLLEVLTGKHPLDPDLPGGAHLVKWVRDHLAEKKDPSRLLDPRLDGRTDSIMHEMLQTLAVAFLCVSNKANERPLMKDVVAMLTEIRHIDVGRSETEKIKAGGCGSKEPQQFMSNEKIINSHGSSNCSFAFSDDSV</sequence>
<accession>C0LGR3</accession>
<accession>O65580</accession>
<accession>Q8W556</accession>
<organism>
    <name type="scientific">Arabidopsis thaliana</name>
    <name type="common">Mouse-ear cress</name>
    <dbReference type="NCBI Taxonomy" id="3702"/>
    <lineage>
        <taxon>Eukaryota</taxon>
        <taxon>Viridiplantae</taxon>
        <taxon>Streptophyta</taxon>
        <taxon>Embryophyta</taxon>
        <taxon>Tracheophyta</taxon>
        <taxon>Spermatophyta</taxon>
        <taxon>Magnoliopsida</taxon>
        <taxon>eudicotyledons</taxon>
        <taxon>Gunneridae</taxon>
        <taxon>Pentapetalae</taxon>
        <taxon>rosids</taxon>
        <taxon>malvids</taxon>
        <taxon>Brassicales</taxon>
        <taxon>Brassicaceae</taxon>
        <taxon>Camelineae</taxon>
        <taxon>Arabidopsis</taxon>
    </lineage>
</organism>
<keyword id="KW-0002">3D-structure</keyword>
<keyword id="KW-0067">ATP-binding</keyword>
<keyword id="KW-1003">Cell membrane</keyword>
<keyword id="KW-1015">Disulfide bond</keyword>
<keyword id="KW-0325">Glycoprotein</keyword>
<keyword id="KW-0418">Kinase</keyword>
<keyword id="KW-0433">Leucine-rich repeat</keyword>
<keyword id="KW-0472">Membrane</keyword>
<keyword id="KW-0547">Nucleotide-binding</keyword>
<keyword id="KW-0597">Phosphoprotein</keyword>
<keyword id="KW-0675">Receptor</keyword>
<keyword id="KW-1185">Reference proteome</keyword>
<keyword id="KW-0677">Repeat</keyword>
<keyword id="KW-0723">Serine/threonine-protein kinase</keyword>
<keyword id="KW-0732">Signal</keyword>
<keyword id="KW-0808">Transferase</keyword>
<keyword id="KW-0812">Transmembrane</keyword>
<keyword id="KW-1133">Transmembrane helix</keyword>
<keyword id="KW-0832">Ubl conjugation</keyword>